<reference key="1">
    <citation type="thesis" date="2011" institute="University of Texas" country="United States">
        <title>Functional analyses of Arabidopsis apyrases 3 through 7.</title>
        <authorList>
            <person name="Yang J."/>
        </authorList>
    </citation>
    <scope>NUCLEOTIDE SEQUENCE [MRNA]</scope>
    <scope>DISRUPTION PHENOTYPE</scope>
    <scope>TISSUE SPECIFICITY</scope>
    <source>
        <strain>cv. Columbia</strain>
    </source>
</reference>
<reference key="2">
    <citation type="journal article" date="2000" name="Nature">
        <title>Sequence and analysis of chromosome 1 of the plant Arabidopsis thaliana.</title>
        <authorList>
            <person name="Theologis A."/>
            <person name="Ecker J.R."/>
            <person name="Palm C.J."/>
            <person name="Federspiel N.A."/>
            <person name="Kaul S."/>
            <person name="White O."/>
            <person name="Alonso J."/>
            <person name="Altafi H."/>
            <person name="Araujo R."/>
            <person name="Bowman C.L."/>
            <person name="Brooks S.Y."/>
            <person name="Buehler E."/>
            <person name="Chan A."/>
            <person name="Chao Q."/>
            <person name="Chen H."/>
            <person name="Cheuk R.F."/>
            <person name="Chin C.W."/>
            <person name="Chung M.K."/>
            <person name="Conn L."/>
            <person name="Conway A.B."/>
            <person name="Conway A.R."/>
            <person name="Creasy T.H."/>
            <person name="Dewar K."/>
            <person name="Dunn P."/>
            <person name="Etgu P."/>
            <person name="Feldblyum T.V."/>
            <person name="Feng J.-D."/>
            <person name="Fong B."/>
            <person name="Fujii C.Y."/>
            <person name="Gill J.E."/>
            <person name="Goldsmith A.D."/>
            <person name="Haas B."/>
            <person name="Hansen N.F."/>
            <person name="Hughes B."/>
            <person name="Huizar L."/>
            <person name="Hunter J.L."/>
            <person name="Jenkins J."/>
            <person name="Johnson-Hopson C."/>
            <person name="Khan S."/>
            <person name="Khaykin E."/>
            <person name="Kim C.J."/>
            <person name="Koo H.L."/>
            <person name="Kremenetskaia I."/>
            <person name="Kurtz D.B."/>
            <person name="Kwan A."/>
            <person name="Lam B."/>
            <person name="Langin-Hooper S."/>
            <person name="Lee A."/>
            <person name="Lee J.M."/>
            <person name="Lenz C.A."/>
            <person name="Li J.H."/>
            <person name="Li Y.-P."/>
            <person name="Lin X."/>
            <person name="Liu S.X."/>
            <person name="Liu Z.A."/>
            <person name="Luros J.S."/>
            <person name="Maiti R."/>
            <person name="Marziali A."/>
            <person name="Militscher J."/>
            <person name="Miranda M."/>
            <person name="Nguyen M."/>
            <person name="Nierman W.C."/>
            <person name="Osborne B.I."/>
            <person name="Pai G."/>
            <person name="Peterson J."/>
            <person name="Pham P.K."/>
            <person name="Rizzo M."/>
            <person name="Rooney T."/>
            <person name="Rowley D."/>
            <person name="Sakano H."/>
            <person name="Salzberg S.L."/>
            <person name="Schwartz J.R."/>
            <person name="Shinn P."/>
            <person name="Southwick A.M."/>
            <person name="Sun H."/>
            <person name="Tallon L.J."/>
            <person name="Tambunga G."/>
            <person name="Toriumi M.J."/>
            <person name="Town C.D."/>
            <person name="Utterback T."/>
            <person name="Van Aken S."/>
            <person name="Vaysberg M."/>
            <person name="Vysotskaia V.S."/>
            <person name="Walker M."/>
            <person name="Wu D."/>
            <person name="Yu G."/>
            <person name="Fraser C.M."/>
            <person name="Venter J.C."/>
            <person name="Davis R.W."/>
        </authorList>
    </citation>
    <scope>NUCLEOTIDE SEQUENCE [LARGE SCALE GENOMIC DNA]</scope>
    <source>
        <strain>cv. Columbia</strain>
    </source>
</reference>
<reference key="3">
    <citation type="journal article" date="2017" name="Plant J.">
        <title>Araport11: a complete reannotation of the Arabidopsis thaliana reference genome.</title>
        <authorList>
            <person name="Cheng C.Y."/>
            <person name="Krishnakumar V."/>
            <person name="Chan A.P."/>
            <person name="Thibaud-Nissen F."/>
            <person name="Schobel S."/>
            <person name="Town C.D."/>
        </authorList>
    </citation>
    <scope>GENOME REANNOTATION</scope>
    <source>
        <strain>cv. Columbia</strain>
    </source>
</reference>
<reference key="4">
    <citation type="journal article" date="2003" name="Science">
        <title>Empirical analysis of transcriptional activity in the Arabidopsis genome.</title>
        <authorList>
            <person name="Yamada K."/>
            <person name="Lim J."/>
            <person name="Dale J.M."/>
            <person name="Chen H."/>
            <person name="Shinn P."/>
            <person name="Palm C.J."/>
            <person name="Southwick A.M."/>
            <person name="Wu H.C."/>
            <person name="Kim C.J."/>
            <person name="Nguyen M."/>
            <person name="Pham P.K."/>
            <person name="Cheuk R.F."/>
            <person name="Karlin-Newmann G."/>
            <person name="Liu S.X."/>
            <person name="Lam B."/>
            <person name="Sakano H."/>
            <person name="Wu T."/>
            <person name="Yu G."/>
            <person name="Miranda M."/>
            <person name="Quach H.L."/>
            <person name="Tripp M."/>
            <person name="Chang C.H."/>
            <person name="Lee J.M."/>
            <person name="Toriumi M.J."/>
            <person name="Chan M.M."/>
            <person name="Tang C.C."/>
            <person name="Onodera C.S."/>
            <person name="Deng J.M."/>
            <person name="Akiyama K."/>
            <person name="Ansari Y."/>
            <person name="Arakawa T."/>
            <person name="Banh J."/>
            <person name="Banno F."/>
            <person name="Bowser L."/>
            <person name="Brooks S.Y."/>
            <person name="Carninci P."/>
            <person name="Chao Q."/>
            <person name="Choy N."/>
            <person name="Enju A."/>
            <person name="Goldsmith A.D."/>
            <person name="Gurjal M."/>
            <person name="Hansen N.F."/>
            <person name="Hayashizaki Y."/>
            <person name="Johnson-Hopson C."/>
            <person name="Hsuan V.W."/>
            <person name="Iida K."/>
            <person name="Karnes M."/>
            <person name="Khan S."/>
            <person name="Koesema E."/>
            <person name="Ishida J."/>
            <person name="Jiang P.X."/>
            <person name="Jones T."/>
            <person name="Kawai J."/>
            <person name="Kamiya A."/>
            <person name="Meyers C."/>
            <person name="Nakajima M."/>
            <person name="Narusaka M."/>
            <person name="Seki M."/>
            <person name="Sakurai T."/>
            <person name="Satou M."/>
            <person name="Tamse R."/>
            <person name="Vaysberg M."/>
            <person name="Wallender E.K."/>
            <person name="Wong C."/>
            <person name="Yamamura Y."/>
            <person name="Yuan S."/>
            <person name="Shinozaki K."/>
            <person name="Davis R.W."/>
            <person name="Theologis A."/>
            <person name="Ecker J.R."/>
        </authorList>
    </citation>
    <scope>NUCLEOTIDE SEQUENCE [LARGE SCALE MRNA]</scope>
    <source>
        <strain>cv. Columbia</strain>
    </source>
</reference>
<reference key="5">
    <citation type="journal article" date="2009" name="DNA Res.">
        <title>Analysis of multiple occurrences of alternative splicing events in Arabidopsis thaliana using novel sequenced full-length cDNAs.</title>
        <authorList>
            <person name="Iida K."/>
            <person name="Fukami-Kobayashi K."/>
            <person name="Toyoda A."/>
            <person name="Sakaki Y."/>
            <person name="Kobayashi M."/>
            <person name="Seki M."/>
            <person name="Shinozaki K."/>
        </authorList>
    </citation>
    <scope>NUCLEOTIDE SEQUENCE [LARGE SCALE MRNA] OF 199-503</scope>
    <source>
        <strain>cv. Columbia</strain>
        <tissue>Rosette leaf</tissue>
    </source>
</reference>
<protein>
    <recommendedName>
        <fullName>Probable apyrase 4</fullName>
        <shortName>AtAPY4</shortName>
        <ecNumber>3.6.1.5</ecNumber>
    </recommendedName>
    <alternativeName>
        <fullName>ATP-diphosphatase</fullName>
    </alternativeName>
    <alternativeName>
        <fullName>ATP-diphosphohydrolase</fullName>
    </alternativeName>
    <alternativeName>
        <fullName>Adenosine diphosphatase</fullName>
        <shortName>ADPase</shortName>
    </alternativeName>
    <alternativeName>
        <fullName>NTPDase</fullName>
    </alternativeName>
    <alternativeName>
        <fullName>Nucleoside triphosphate diphosphohydrolase 4</fullName>
    </alternativeName>
</protein>
<organism>
    <name type="scientific">Arabidopsis thaliana</name>
    <name type="common">Mouse-ear cress</name>
    <dbReference type="NCBI Taxonomy" id="3702"/>
    <lineage>
        <taxon>Eukaryota</taxon>
        <taxon>Viridiplantae</taxon>
        <taxon>Streptophyta</taxon>
        <taxon>Embryophyta</taxon>
        <taxon>Tracheophyta</taxon>
        <taxon>Spermatophyta</taxon>
        <taxon>Magnoliopsida</taxon>
        <taxon>eudicotyledons</taxon>
        <taxon>Gunneridae</taxon>
        <taxon>Pentapetalae</taxon>
        <taxon>rosids</taxon>
        <taxon>malvids</taxon>
        <taxon>Brassicales</taxon>
        <taxon>Brassicaceae</taxon>
        <taxon>Camelineae</taxon>
        <taxon>Arabidopsis</taxon>
    </lineage>
</organism>
<accession>Q8H1D8</accession>
<accession>B9DI02</accession>
<accession>Q94AP8</accession>
<accession>Q9XI63</accession>
<evidence type="ECO:0000250" key="1"/>
<evidence type="ECO:0000255" key="2"/>
<evidence type="ECO:0000256" key="3">
    <source>
        <dbReference type="SAM" id="MobiDB-lite"/>
    </source>
</evidence>
<evidence type="ECO:0000269" key="4">
    <source ref="1"/>
</evidence>
<evidence type="ECO:0000305" key="5"/>
<keyword id="KW-0067">ATP-binding</keyword>
<keyword id="KW-0106">Calcium</keyword>
<keyword id="KW-0325">Glycoprotein</keyword>
<keyword id="KW-0378">Hydrolase</keyword>
<keyword id="KW-0472">Membrane</keyword>
<keyword id="KW-0547">Nucleotide-binding</keyword>
<keyword id="KW-1185">Reference proteome</keyword>
<keyword id="KW-0735">Signal-anchor</keyword>
<keyword id="KW-0812">Transmembrane</keyword>
<keyword id="KW-1133">Transmembrane helix</keyword>
<sequence>MQRSNARSRSNINSDMVDPPEVQTSPGNHRSSPSTAAKPKSKRTKSIIFVIVACVTIALGLLFIGYSILRSGRNRRVSLHYSVIIDGGSSGTRVHVFGYRIESGKPVFDFGEENYASLKLSPGLSAYADNPEGVSESVTELVEFAKKRVHKGKLKKSDIRLMATAGMRLLELPVQEQILDVTRRVLRSSGFDFRDEWASVISGSDEGVYAWVVANHALGSLGGEPLKTTGIVELGGASAQVTFVSTELVPSEFSRTLAYGNVSYNLYSHSFLDFGQDAAQEKLSESLYNSAANSTGEGIVPDPCIPKGYILETNLQKDLPGFLADKGKFTATLQAAGNFSECRSAAFAMLQEEKGKCTYKRCSIGSIFTPNLQGSFLATENFFHTSKFFGLGEKEWLSEMILAGKRFCGEEWSKLKVKYPTFKDENLLRYCFSSAYIISMLHDSLGVALDDERIKYASKAGEEDIPLDWALGAFILNTATATFDYSGKSRKILDLSNVAKYKI</sequence>
<proteinExistence type="evidence at transcript level"/>
<feature type="chain" id="PRO_0000420342" description="Probable apyrase 4">
    <location>
        <begin position="1"/>
        <end position="503"/>
    </location>
</feature>
<feature type="topological domain" description="Cytoplasmic" evidence="2">
    <location>
        <begin position="1"/>
        <end position="45"/>
    </location>
</feature>
<feature type="transmembrane region" description="Helical; Signal-anchor for type II membrane protein" evidence="2">
    <location>
        <begin position="46"/>
        <end position="66"/>
    </location>
</feature>
<feature type="topological domain" description="Extracellular" evidence="2">
    <location>
        <begin position="67"/>
        <end position="503"/>
    </location>
</feature>
<feature type="region of interest" description="Disordered" evidence="3">
    <location>
        <begin position="1"/>
        <end position="39"/>
    </location>
</feature>
<feature type="compositionally biased region" description="Low complexity" evidence="3">
    <location>
        <begin position="1"/>
        <end position="14"/>
    </location>
</feature>
<feature type="active site" description="Proton acceptor" evidence="1">
    <location>
        <position position="206"/>
    </location>
</feature>
<feature type="binding site" evidence="5">
    <location>
        <begin position="83"/>
        <end position="93"/>
    </location>
    <ligand>
        <name>ATP</name>
        <dbReference type="ChEBI" id="CHEBI:30616"/>
    </ligand>
</feature>
<feature type="binding site" evidence="5">
    <location>
        <begin position="230"/>
        <end position="240"/>
    </location>
    <ligand>
        <name>ATP</name>
        <dbReference type="ChEBI" id="CHEBI:30616"/>
    </ligand>
</feature>
<feature type="glycosylation site" description="N-linked (GlcNAc...) asparagine" evidence="2">
    <location>
        <position position="261"/>
    </location>
</feature>
<feature type="glycosylation site" description="N-linked (GlcNAc...) asparagine" evidence="2">
    <location>
        <position position="293"/>
    </location>
</feature>
<feature type="glycosylation site" description="N-linked (GlcNAc...) asparagine" evidence="2">
    <location>
        <position position="338"/>
    </location>
</feature>
<feature type="sequence conflict" description="In Ref. 5; BAH20369." evidence="5" ref="5">
    <original>E</original>
    <variation>G</variation>
    <location>
        <position position="224"/>
    </location>
</feature>
<feature type="sequence conflict" description="In Ref. 4; AAK76563." evidence="5" ref="4">
    <original>Q</original>
    <variation>R</variation>
    <location>
        <position position="351"/>
    </location>
</feature>
<dbReference type="EC" id="3.6.1.5"/>
<dbReference type="EMBL" id="JF830009">
    <property type="protein sequence ID" value="AEJ38085.1"/>
    <property type="molecule type" value="mRNA"/>
</dbReference>
<dbReference type="EMBL" id="AC007576">
    <property type="protein sequence ID" value="AAD39310.1"/>
    <property type="status" value="ALT_SEQ"/>
    <property type="molecule type" value="Genomic_DNA"/>
</dbReference>
<dbReference type="EMBL" id="CP002684">
    <property type="protein sequence ID" value="AEE29126.1"/>
    <property type="molecule type" value="Genomic_DNA"/>
</dbReference>
<dbReference type="EMBL" id="AY045889">
    <property type="protein sequence ID" value="AAK76563.1"/>
    <property type="molecule type" value="mRNA"/>
</dbReference>
<dbReference type="EMBL" id="AY150499">
    <property type="protein sequence ID" value="AAN13015.1"/>
    <property type="molecule type" value="mRNA"/>
</dbReference>
<dbReference type="EMBL" id="AK317711">
    <property type="protein sequence ID" value="BAH20369.1"/>
    <property type="molecule type" value="mRNA"/>
</dbReference>
<dbReference type="PIR" id="C86276">
    <property type="entry name" value="C86276"/>
</dbReference>
<dbReference type="RefSeq" id="NP_563942.1">
    <property type="nucleotide sequence ID" value="NM_101289.5"/>
</dbReference>
<dbReference type="SMR" id="Q8H1D8"/>
<dbReference type="FunCoup" id="Q8H1D8">
    <property type="interactions" value="1345"/>
</dbReference>
<dbReference type="STRING" id="3702.Q8H1D8"/>
<dbReference type="GlyCosmos" id="Q8H1D8">
    <property type="glycosylation" value="3 sites, No reported glycans"/>
</dbReference>
<dbReference type="GlyGen" id="Q8H1D8">
    <property type="glycosylation" value="3 sites"/>
</dbReference>
<dbReference type="iPTMnet" id="Q8H1D8"/>
<dbReference type="PaxDb" id="3702-AT1G14230.1"/>
<dbReference type="ProteomicsDB" id="240885"/>
<dbReference type="EnsemblPlants" id="AT1G14230.1">
    <property type="protein sequence ID" value="AT1G14230.1"/>
    <property type="gene ID" value="AT1G14230"/>
</dbReference>
<dbReference type="GeneID" id="837984"/>
<dbReference type="Gramene" id="AT1G14230.1">
    <property type="protein sequence ID" value="AT1G14230.1"/>
    <property type="gene ID" value="AT1G14230"/>
</dbReference>
<dbReference type="KEGG" id="ath:AT1G14230"/>
<dbReference type="Araport" id="AT1G14230"/>
<dbReference type="TAIR" id="AT1G14230"/>
<dbReference type="eggNOG" id="KOG1386">
    <property type="taxonomic scope" value="Eukaryota"/>
</dbReference>
<dbReference type="HOGENOM" id="CLU_010246_5_1_1"/>
<dbReference type="InParanoid" id="Q8H1D8"/>
<dbReference type="OMA" id="NEECRYQ"/>
<dbReference type="PhylomeDB" id="Q8H1D8"/>
<dbReference type="BioCyc" id="ARA:AT1G14230-MONOMER"/>
<dbReference type="BRENDA" id="3.6.1.5">
    <property type="organism ID" value="399"/>
</dbReference>
<dbReference type="PRO" id="PR:Q8H1D8"/>
<dbReference type="Proteomes" id="UP000006548">
    <property type="component" value="Chromosome 1"/>
</dbReference>
<dbReference type="ExpressionAtlas" id="Q8H1D8">
    <property type="expression patterns" value="baseline and differential"/>
</dbReference>
<dbReference type="GO" id="GO:0016020">
    <property type="term" value="C:membrane"/>
    <property type="evidence" value="ECO:0007669"/>
    <property type="project" value="UniProtKB-SubCell"/>
</dbReference>
<dbReference type="GO" id="GO:0004050">
    <property type="term" value="F:apyrase activity"/>
    <property type="evidence" value="ECO:0007669"/>
    <property type="project" value="UniProtKB-EC"/>
</dbReference>
<dbReference type="GO" id="GO:0005524">
    <property type="term" value="F:ATP binding"/>
    <property type="evidence" value="ECO:0007669"/>
    <property type="project" value="UniProtKB-KW"/>
</dbReference>
<dbReference type="CDD" id="cd24042">
    <property type="entry name" value="ASKHA_NBD_AtAPY3-like"/>
    <property type="match status" value="1"/>
</dbReference>
<dbReference type="Gene3D" id="3.30.420.40">
    <property type="match status" value="1"/>
</dbReference>
<dbReference type="Gene3D" id="3.30.420.150">
    <property type="entry name" value="Exopolyphosphatase. Domain 2"/>
    <property type="match status" value="1"/>
</dbReference>
<dbReference type="InterPro" id="IPR000407">
    <property type="entry name" value="GDA1_CD39_NTPase"/>
</dbReference>
<dbReference type="PANTHER" id="PTHR11782">
    <property type="entry name" value="ADENOSINE/GUANOSINE DIPHOSPHATASE"/>
    <property type="match status" value="1"/>
</dbReference>
<dbReference type="PANTHER" id="PTHR11782:SF100">
    <property type="entry name" value="APYRASE 3-RELATED"/>
    <property type="match status" value="1"/>
</dbReference>
<dbReference type="Pfam" id="PF01150">
    <property type="entry name" value="GDA1_CD39"/>
    <property type="match status" value="1"/>
</dbReference>
<comment type="function">
    <text evidence="1">Catalyzes the hydrolysis of phosphoanhydride bonds of nucleoside tri- and di-phosphates.</text>
</comment>
<comment type="catalytic activity">
    <reaction>
        <text>a ribonucleoside 5'-triphosphate + 2 H2O = a ribonucleoside 5'-phosphate + 2 phosphate + 2 H(+)</text>
        <dbReference type="Rhea" id="RHEA:36795"/>
        <dbReference type="ChEBI" id="CHEBI:15377"/>
        <dbReference type="ChEBI" id="CHEBI:15378"/>
        <dbReference type="ChEBI" id="CHEBI:43474"/>
        <dbReference type="ChEBI" id="CHEBI:58043"/>
        <dbReference type="ChEBI" id="CHEBI:61557"/>
        <dbReference type="EC" id="3.6.1.5"/>
    </reaction>
</comment>
<comment type="cofactor">
    <cofactor evidence="1">
        <name>Ca(2+)</name>
        <dbReference type="ChEBI" id="CHEBI:29108"/>
    </cofactor>
</comment>
<comment type="subcellular location">
    <subcellularLocation>
        <location evidence="1">Membrane</location>
        <topology evidence="1">Single-pass type II membrane protein</topology>
    </subcellularLocation>
</comment>
<comment type="tissue specificity">
    <text evidence="4">Expressed both in the primary root and lateral root but not in the rosette leaves.</text>
</comment>
<comment type="disruption phenotype">
    <text evidence="4">No visible phenotype.</text>
</comment>
<comment type="similarity">
    <text evidence="5">Belongs to the GDA1/CD39 NTPase family.</text>
</comment>
<comment type="sequence caution" evidence="5">
    <conflict type="erroneous gene model prediction">
        <sequence resource="EMBL-CDS" id="AAD39310"/>
    </conflict>
</comment>
<gene>
    <name type="primary">APY4</name>
    <name type="ordered locus">At1g14230</name>
    <name type="ORF">F7A19.33</name>
</gene>
<name>APY4_ARATH</name>